<keyword id="KW-0067">ATP-binding</keyword>
<keyword id="KW-0963">Cytoplasm</keyword>
<keyword id="KW-0436">Ligase</keyword>
<keyword id="KW-0547">Nucleotide-binding</keyword>
<keyword id="KW-0694">RNA-binding</keyword>
<keyword id="KW-0819">tRNA processing</keyword>
<keyword id="KW-0820">tRNA-binding</keyword>
<sequence length="366" mass="40620">MTVTGIIAEFNPFHYGHQYLLSQAKGLKIVAMSGNFVQRGEPALVDKWVRAQMALENGADLVVELPFLVSVQSADYFAQGAVDILMRLGIDTLAFGTEQLFDYQKLSRLYSEQAEHMTAYLATLPDHLSYPQKTQSMWEAFAGLSATGDRPNHLLALSYVKASAGKKLQLQPIKRLGAGFHSEAKDQCLSSATAIRKHIADRAFVEKSSPNAALILRAPQVTWEHYFPLLKYHILTAPDLTQFFQVNDELASRISAAIRSVATVDELVEAVATKHYTKARVRRVLTYILVKAVEAPLPEGIHVLGFSKKGQAHLKTIKASVPLISRIGAKPWDQLTQRADTVYQLGHMDMPEQTWGRVPIRPGAMN</sequence>
<protein>
    <recommendedName>
        <fullName evidence="1">tRNA(Met) cytidine acetate ligase</fullName>
        <ecNumber evidence="1">6.3.4.-</ecNumber>
    </recommendedName>
</protein>
<evidence type="ECO:0000255" key="1">
    <source>
        <dbReference type="HAMAP-Rule" id="MF_01539"/>
    </source>
</evidence>
<reference key="1">
    <citation type="journal article" date="2008" name="PLoS ONE">
        <title>Genome sequence of a lancefield group C Streptococcus zooepidemicus strain causing epidemic nephritis: new information about an old disease.</title>
        <authorList>
            <person name="Beres S.B."/>
            <person name="Sesso R."/>
            <person name="Pinto S.W.L."/>
            <person name="Hoe N.P."/>
            <person name="Porcella S.F."/>
            <person name="Deleo F.R."/>
            <person name="Musser J.M."/>
        </authorList>
    </citation>
    <scope>NUCLEOTIDE SEQUENCE [LARGE SCALE GENOMIC DNA]</scope>
    <source>
        <strain>MGCS10565</strain>
    </source>
</reference>
<gene>
    <name evidence="1" type="primary">tmcAL</name>
    <name type="ordered locus">Sez_1683</name>
</gene>
<name>TMCAL_STREM</name>
<comment type="function">
    <text evidence="1">Catalyzes the formation of N(4)-acetylcytidine (ac(4)C) at the wobble position of elongator tRNA(Met), using acetate and ATP as substrates. First activates an acetate ion to form acetyladenylate (Ac-AMP) and then transfers the acetyl group to tRNA to form ac(4)C34.</text>
</comment>
<comment type="catalytic activity">
    <reaction evidence="1">
        <text>cytidine(34) in elongator tRNA(Met) + acetate + ATP = N(4)-acetylcytidine(34) in elongator tRNA(Met) + AMP + diphosphate</text>
        <dbReference type="Rhea" id="RHEA:58144"/>
        <dbReference type="Rhea" id="RHEA-COMP:10693"/>
        <dbReference type="Rhea" id="RHEA-COMP:10694"/>
        <dbReference type="ChEBI" id="CHEBI:30089"/>
        <dbReference type="ChEBI" id="CHEBI:30616"/>
        <dbReference type="ChEBI" id="CHEBI:33019"/>
        <dbReference type="ChEBI" id="CHEBI:74900"/>
        <dbReference type="ChEBI" id="CHEBI:82748"/>
        <dbReference type="ChEBI" id="CHEBI:456215"/>
    </reaction>
</comment>
<comment type="subcellular location">
    <subcellularLocation>
        <location evidence="1">Cytoplasm</location>
    </subcellularLocation>
</comment>
<comment type="similarity">
    <text evidence="1">Belongs to the TmcAL family.</text>
</comment>
<proteinExistence type="inferred from homology"/>
<feature type="chain" id="PRO_1000198860" description="tRNA(Met) cytidine acetate ligase">
    <location>
        <begin position="1"/>
        <end position="366"/>
    </location>
</feature>
<feature type="binding site" evidence="1">
    <location>
        <begin position="7"/>
        <end position="20"/>
    </location>
    <ligand>
        <name>ATP</name>
        <dbReference type="ChEBI" id="CHEBI:30616"/>
    </ligand>
</feature>
<feature type="binding site" evidence="1">
    <location>
        <position position="96"/>
    </location>
    <ligand>
        <name>ATP</name>
        <dbReference type="ChEBI" id="CHEBI:30616"/>
    </ligand>
</feature>
<feature type="binding site" evidence="1">
    <location>
        <position position="152"/>
    </location>
    <ligand>
        <name>ATP</name>
        <dbReference type="ChEBI" id="CHEBI:30616"/>
    </ligand>
</feature>
<feature type="binding site" evidence="1">
    <location>
        <position position="175"/>
    </location>
    <ligand>
        <name>ATP</name>
        <dbReference type="ChEBI" id="CHEBI:30616"/>
    </ligand>
</feature>
<accession>B4U4U5</accession>
<dbReference type="EC" id="6.3.4.-" evidence="1"/>
<dbReference type="EMBL" id="CP001129">
    <property type="protein sequence ID" value="ACG63012.1"/>
    <property type="molecule type" value="Genomic_DNA"/>
</dbReference>
<dbReference type="RefSeq" id="WP_012516268.1">
    <property type="nucleotide sequence ID" value="NC_011134.1"/>
</dbReference>
<dbReference type="SMR" id="B4U4U5"/>
<dbReference type="KEGG" id="sez:Sez_1683"/>
<dbReference type="HOGENOM" id="CLU_038915_0_2_9"/>
<dbReference type="Proteomes" id="UP000001873">
    <property type="component" value="Chromosome"/>
</dbReference>
<dbReference type="GO" id="GO:0005737">
    <property type="term" value="C:cytoplasm"/>
    <property type="evidence" value="ECO:0007669"/>
    <property type="project" value="UniProtKB-SubCell"/>
</dbReference>
<dbReference type="GO" id="GO:0005524">
    <property type="term" value="F:ATP binding"/>
    <property type="evidence" value="ECO:0007669"/>
    <property type="project" value="UniProtKB-KW"/>
</dbReference>
<dbReference type="GO" id="GO:0016879">
    <property type="term" value="F:ligase activity, forming carbon-nitrogen bonds"/>
    <property type="evidence" value="ECO:0007669"/>
    <property type="project" value="UniProtKB-UniRule"/>
</dbReference>
<dbReference type="GO" id="GO:0000049">
    <property type="term" value="F:tRNA binding"/>
    <property type="evidence" value="ECO:0007669"/>
    <property type="project" value="UniProtKB-KW"/>
</dbReference>
<dbReference type="GO" id="GO:0006400">
    <property type="term" value="P:tRNA modification"/>
    <property type="evidence" value="ECO:0007669"/>
    <property type="project" value="UniProtKB-UniRule"/>
</dbReference>
<dbReference type="Gene3D" id="3.40.50.620">
    <property type="entry name" value="HUPs"/>
    <property type="match status" value="1"/>
</dbReference>
<dbReference type="HAMAP" id="MF_01539">
    <property type="entry name" value="TmcAL"/>
    <property type="match status" value="1"/>
</dbReference>
<dbReference type="InterPro" id="IPR014729">
    <property type="entry name" value="Rossmann-like_a/b/a_fold"/>
</dbReference>
<dbReference type="InterPro" id="IPR008513">
    <property type="entry name" value="tRNA(Met)_cyd_acetate_ligase"/>
</dbReference>
<dbReference type="NCBIfam" id="NF010191">
    <property type="entry name" value="PRK13670.1"/>
    <property type="match status" value="1"/>
</dbReference>
<dbReference type="PANTHER" id="PTHR37825">
    <property type="entry name" value="TRNA(MET) CYTIDINE ACETATE LIGASE"/>
    <property type="match status" value="1"/>
</dbReference>
<dbReference type="PANTHER" id="PTHR37825:SF1">
    <property type="entry name" value="TRNA(MET) CYTIDINE ACETATE LIGASE"/>
    <property type="match status" value="1"/>
</dbReference>
<dbReference type="Pfam" id="PF05636">
    <property type="entry name" value="HIGH_NTase1"/>
    <property type="match status" value="1"/>
</dbReference>
<dbReference type="SUPFAM" id="SSF52374">
    <property type="entry name" value="Nucleotidylyl transferase"/>
    <property type="match status" value="1"/>
</dbReference>
<organism>
    <name type="scientific">Streptococcus equi subsp. zooepidemicus (strain MGCS10565)</name>
    <dbReference type="NCBI Taxonomy" id="552526"/>
    <lineage>
        <taxon>Bacteria</taxon>
        <taxon>Bacillati</taxon>
        <taxon>Bacillota</taxon>
        <taxon>Bacilli</taxon>
        <taxon>Lactobacillales</taxon>
        <taxon>Streptococcaceae</taxon>
        <taxon>Streptococcus</taxon>
    </lineage>
</organism>